<reference key="1">
    <citation type="journal article" date="1987" name="Biochemistry">
        <title>Structure of the class II enzyme of human liver alcohol dehydrogenase: combined cDNA and protein sequence determination of the pi subunit.</title>
        <authorList>
            <person name="Hoeoeg J.-O."/>
            <person name="von Bahr-Lindstroem H."/>
            <person name="Heden L.-O."/>
            <person name="Holmquist B."/>
            <person name="Larsson K."/>
            <person name="Hempel J."/>
            <person name="Vallee B.L."/>
            <person name="Joernvall H."/>
        </authorList>
    </citation>
    <scope>NUCLEOTIDE SEQUENCE [MRNA] (ISOFORM 1)</scope>
    <scope>PARTIAL PROTEIN SEQUENCE</scope>
</reference>
<reference key="2">
    <citation type="journal article" date="1991" name="Gene">
        <title>Cloning and characterization of the human ADH4 gene.</title>
        <authorList>
            <person name="von Bahr-Lindstroem H."/>
            <person name="Joernvall H."/>
            <person name="Hoeoeg J.-O."/>
        </authorList>
    </citation>
    <scope>NUCLEOTIDE SEQUENCE [GENOMIC DNA] (ISOFORM 1)</scope>
    <source>
        <tissue>Fetal liver</tissue>
    </source>
</reference>
<reference key="3">
    <citation type="journal article" date="2004" name="Nat. Genet.">
        <title>Complete sequencing and characterization of 21,243 full-length human cDNAs.</title>
        <authorList>
            <person name="Ota T."/>
            <person name="Suzuki Y."/>
            <person name="Nishikawa T."/>
            <person name="Otsuki T."/>
            <person name="Sugiyama T."/>
            <person name="Irie R."/>
            <person name="Wakamatsu A."/>
            <person name="Hayashi K."/>
            <person name="Sato H."/>
            <person name="Nagai K."/>
            <person name="Kimura K."/>
            <person name="Makita H."/>
            <person name="Sekine M."/>
            <person name="Obayashi M."/>
            <person name="Nishi T."/>
            <person name="Shibahara T."/>
            <person name="Tanaka T."/>
            <person name="Ishii S."/>
            <person name="Yamamoto J."/>
            <person name="Saito K."/>
            <person name="Kawai Y."/>
            <person name="Isono Y."/>
            <person name="Nakamura Y."/>
            <person name="Nagahari K."/>
            <person name="Murakami K."/>
            <person name="Yasuda T."/>
            <person name="Iwayanagi T."/>
            <person name="Wagatsuma M."/>
            <person name="Shiratori A."/>
            <person name="Sudo H."/>
            <person name="Hosoiri T."/>
            <person name="Kaku Y."/>
            <person name="Kodaira H."/>
            <person name="Kondo H."/>
            <person name="Sugawara M."/>
            <person name="Takahashi M."/>
            <person name="Kanda K."/>
            <person name="Yokoi T."/>
            <person name="Furuya T."/>
            <person name="Kikkawa E."/>
            <person name="Omura Y."/>
            <person name="Abe K."/>
            <person name="Kamihara K."/>
            <person name="Katsuta N."/>
            <person name="Sato K."/>
            <person name="Tanikawa M."/>
            <person name="Yamazaki M."/>
            <person name="Ninomiya K."/>
            <person name="Ishibashi T."/>
            <person name="Yamashita H."/>
            <person name="Murakawa K."/>
            <person name="Fujimori K."/>
            <person name="Tanai H."/>
            <person name="Kimata M."/>
            <person name="Watanabe M."/>
            <person name="Hiraoka S."/>
            <person name="Chiba Y."/>
            <person name="Ishida S."/>
            <person name="Ono Y."/>
            <person name="Takiguchi S."/>
            <person name="Watanabe S."/>
            <person name="Yosida M."/>
            <person name="Hotuta T."/>
            <person name="Kusano J."/>
            <person name="Kanehori K."/>
            <person name="Takahashi-Fujii A."/>
            <person name="Hara H."/>
            <person name="Tanase T.-O."/>
            <person name="Nomura Y."/>
            <person name="Togiya S."/>
            <person name="Komai F."/>
            <person name="Hara R."/>
            <person name="Takeuchi K."/>
            <person name="Arita M."/>
            <person name="Imose N."/>
            <person name="Musashino K."/>
            <person name="Yuuki H."/>
            <person name="Oshima A."/>
            <person name="Sasaki N."/>
            <person name="Aotsuka S."/>
            <person name="Yoshikawa Y."/>
            <person name="Matsunawa H."/>
            <person name="Ichihara T."/>
            <person name="Shiohata N."/>
            <person name="Sano S."/>
            <person name="Moriya S."/>
            <person name="Momiyama H."/>
            <person name="Satoh N."/>
            <person name="Takami S."/>
            <person name="Terashima Y."/>
            <person name="Suzuki O."/>
            <person name="Nakagawa S."/>
            <person name="Senoh A."/>
            <person name="Mizoguchi H."/>
            <person name="Goto Y."/>
            <person name="Shimizu F."/>
            <person name="Wakebe H."/>
            <person name="Hishigaki H."/>
            <person name="Watanabe T."/>
            <person name="Sugiyama A."/>
            <person name="Takemoto M."/>
            <person name="Kawakami B."/>
            <person name="Yamazaki M."/>
            <person name="Watanabe K."/>
            <person name="Kumagai A."/>
            <person name="Itakura S."/>
            <person name="Fukuzumi Y."/>
            <person name="Fujimori Y."/>
            <person name="Komiyama M."/>
            <person name="Tashiro H."/>
            <person name="Tanigami A."/>
            <person name="Fujiwara T."/>
            <person name="Ono T."/>
            <person name="Yamada K."/>
            <person name="Fujii Y."/>
            <person name="Ozaki K."/>
            <person name="Hirao M."/>
            <person name="Ohmori Y."/>
            <person name="Kawabata A."/>
            <person name="Hikiji T."/>
            <person name="Kobatake N."/>
            <person name="Inagaki H."/>
            <person name="Ikema Y."/>
            <person name="Okamoto S."/>
            <person name="Okitani R."/>
            <person name="Kawakami T."/>
            <person name="Noguchi S."/>
            <person name="Itoh T."/>
            <person name="Shigeta K."/>
            <person name="Senba T."/>
            <person name="Matsumura K."/>
            <person name="Nakajima Y."/>
            <person name="Mizuno T."/>
            <person name="Morinaga M."/>
            <person name="Sasaki M."/>
            <person name="Togashi T."/>
            <person name="Oyama M."/>
            <person name="Hata H."/>
            <person name="Watanabe M."/>
            <person name="Komatsu T."/>
            <person name="Mizushima-Sugano J."/>
            <person name="Satoh T."/>
            <person name="Shirai Y."/>
            <person name="Takahashi Y."/>
            <person name="Nakagawa K."/>
            <person name="Okumura K."/>
            <person name="Nagase T."/>
            <person name="Nomura N."/>
            <person name="Kikuchi H."/>
            <person name="Masuho Y."/>
            <person name="Yamashita R."/>
            <person name="Nakai K."/>
            <person name="Yada T."/>
            <person name="Nakamura Y."/>
            <person name="Ohara O."/>
            <person name="Isogai T."/>
            <person name="Sugano S."/>
        </authorList>
    </citation>
    <scope>NUCLEOTIDE SEQUENCE [LARGE SCALE MRNA] (ISOFORMS 1 AND 2)</scope>
    <scope>VARIANTS VAL-309 AND ILE-374</scope>
    <source>
        <tissue>Hippocampus</tissue>
        <tissue>Liver</tissue>
    </source>
</reference>
<reference key="4">
    <citation type="submission" date="2005-03" db="EMBL/GenBank/DDBJ databases">
        <authorList>
            <consortium name="NIEHS SNPs program"/>
        </authorList>
    </citation>
    <scope>NUCLEOTIDE SEQUENCE [GENOMIC DNA]</scope>
    <scope>VARIANT HIS-318</scope>
</reference>
<reference key="5">
    <citation type="journal article" date="2005" name="Nature">
        <title>Generation and annotation of the DNA sequences of human chromosomes 2 and 4.</title>
        <authorList>
            <person name="Hillier L.W."/>
            <person name="Graves T.A."/>
            <person name="Fulton R.S."/>
            <person name="Fulton L.A."/>
            <person name="Pepin K.H."/>
            <person name="Minx P."/>
            <person name="Wagner-McPherson C."/>
            <person name="Layman D."/>
            <person name="Wylie K."/>
            <person name="Sekhon M."/>
            <person name="Becker M.C."/>
            <person name="Fewell G.A."/>
            <person name="Delehaunty K.D."/>
            <person name="Miner T.L."/>
            <person name="Nash W.E."/>
            <person name="Kremitzki C."/>
            <person name="Oddy L."/>
            <person name="Du H."/>
            <person name="Sun H."/>
            <person name="Bradshaw-Cordum H."/>
            <person name="Ali J."/>
            <person name="Carter J."/>
            <person name="Cordes M."/>
            <person name="Harris A."/>
            <person name="Isak A."/>
            <person name="van Brunt A."/>
            <person name="Nguyen C."/>
            <person name="Du F."/>
            <person name="Courtney L."/>
            <person name="Kalicki J."/>
            <person name="Ozersky P."/>
            <person name="Abbott S."/>
            <person name="Armstrong J."/>
            <person name="Belter E.A."/>
            <person name="Caruso L."/>
            <person name="Cedroni M."/>
            <person name="Cotton M."/>
            <person name="Davidson T."/>
            <person name="Desai A."/>
            <person name="Elliott G."/>
            <person name="Erb T."/>
            <person name="Fronick C."/>
            <person name="Gaige T."/>
            <person name="Haakenson W."/>
            <person name="Haglund K."/>
            <person name="Holmes A."/>
            <person name="Harkins R."/>
            <person name="Kim K."/>
            <person name="Kruchowski S.S."/>
            <person name="Strong C.M."/>
            <person name="Grewal N."/>
            <person name="Goyea E."/>
            <person name="Hou S."/>
            <person name="Levy A."/>
            <person name="Martinka S."/>
            <person name="Mead K."/>
            <person name="McLellan M.D."/>
            <person name="Meyer R."/>
            <person name="Randall-Maher J."/>
            <person name="Tomlinson C."/>
            <person name="Dauphin-Kohlberg S."/>
            <person name="Kozlowicz-Reilly A."/>
            <person name="Shah N."/>
            <person name="Swearengen-Shahid S."/>
            <person name="Snider J."/>
            <person name="Strong J.T."/>
            <person name="Thompson J."/>
            <person name="Yoakum M."/>
            <person name="Leonard S."/>
            <person name="Pearman C."/>
            <person name="Trani L."/>
            <person name="Radionenko M."/>
            <person name="Waligorski J.E."/>
            <person name="Wang C."/>
            <person name="Rock S.M."/>
            <person name="Tin-Wollam A.-M."/>
            <person name="Maupin R."/>
            <person name="Latreille P."/>
            <person name="Wendl M.C."/>
            <person name="Yang S.-P."/>
            <person name="Pohl C."/>
            <person name="Wallis J.W."/>
            <person name="Spieth J."/>
            <person name="Bieri T.A."/>
            <person name="Berkowicz N."/>
            <person name="Nelson J.O."/>
            <person name="Osborne J."/>
            <person name="Ding L."/>
            <person name="Meyer R."/>
            <person name="Sabo A."/>
            <person name="Shotland Y."/>
            <person name="Sinha P."/>
            <person name="Wohldmann P.E."/>
            <person name="Cook L.L."/>
            <person name="Hickenbotham M.T."/>
            <person name="Eldred J."/>
            <person name="Williams D."/>
            <person name="Jones T.A."/>
            <person name="She X."/>
            <person name="Ciccarelli F.D."/>
            <person name="Izaurralde E."/>
            <person name="Taylor J."/>
            <person name="Schmutz J."/>
            <person name="Myers R.M."/>
            <person name="Cox D.R."/>
            <person name="Huang X."/>
            <person name="McPherson J.D."/>
            <person name="Mardis E.R."/>
            <person name="Clifton S.W."/>
            <person name="Warren W.C."/>
            <person name="Chinwalla A.T."/>
            <person name="Eddy S.R."/>
            <person name="Marra M.A."/>
            <person name="Ovcharenko I."/>
            <person name="Furey T.S."/>
            <person name="Miller W."/>
            <person name="Eichler E.E."/>
            <person name="Bork P."/>
            <person name="Suyama M."/>
            <person name="Torrents D."/>
            <person name="Waterston R.H."/>
            <person name="Wilson R.K."/>
        </authorList>
    </citation>
    <scope>NUCLEOTIDE SEQUENCE [LARGE SCALE GENOMIC DNA]</scope>
</reference>
<reference key="6">
    <citation type="journal article" date="2004" name="Genome Res.">
        <title>The status, quality, and expansion of the NIH full-length cDNA project: the Mammalian Gene Collection (MGC).</title>
        <authorList>
            <consortium name="The MGC Project Team"/>
        </authorList>
    </citation>
    <scope>NUCLEOTIDE SEQUENCE [LARGE SCALE MRNA] (ISOFORM 1)</scope>
    <scope>VARIANTS VAL-309 AND ILE-374</scope>
    <source>
        <tissue>Liver</tissue>
    </source>
</reference>
<reference key="7">
    <citation type="journal article" date="1999" name="J. Biol. Chem.">
        <title>A novel subtype of class II alcohol dehydrogenase in rodents. Unique Pro(47) and Ser(182) modulates hydride transfer in the mouse enzyme.</title>
        <authorList>
            <person name="Svensson S."/>
            <person name="Stroemberg P."/>
            <person name="Hoeoeg J.-O."/>
        </authorList>
    </citation>
    <scope>CATALYTIC ACTIVITY</scope>
    <scope>FUNCTION</scope>
    <scope>BIOPHYSICOCHEMICAL PROPERTIES</scope>
    <source>
        <tissue>Liver</tissue>
    </source>
</reference>
<reference key="8">
    <citation type="journal article" date="2005" name="J. Biol. Chem.">
        <title>Omega-oxidation of 20-hydroxyeicosatetraenoic acid (20-HETE) in cerebral microvascular smooth muscle and endothelium by alcohol dehydrogenase 4.</title>
        <authorList>
            <person name="Collins X.H."/>
            <person name="Harmon S.D."/>
            <person name="Kaduce T.L."/>
            <person name="Berst K.B."/>
            <person name="Fang X."/>
            <person name="Moore S.A."/>
            <person name="Raju T.V."/>
            <person name="Falck J.R."/>
            <person name="Weintraub N.L."/>
            <person name="Duester G."/>
            <person name="Plapp B.V."/>
            <person name="Spector A.A."/>
        </authorList>
    </citation>
    <scope>CATALYTIC ACTIVITY</scope>
    <scope>FUNCTION</scope>
    <scope>BIOPHYSICOCHEMICAL PROPERTIES</scope>
    <scope>ACTIVITY REGULATION</scope>
</reference>
<reference key="9">
    <citation type="journal article" date="2007" name="Cell. Mol. Life Sci.">
        <title>Alcohol dehydrogenase 2 is a major hepatic enzyme for human retinol metabolism.</title>
        <authorList>
            <person name="Hellgren M."/>
            <person name="Stroemberg P."/>
            <person name="Gallego O."/>
            <person name="Martras S."/>
            <person name="Farres J."/>
            <person name="Persson B."/>
            <person name="Pares X."/>
            <person name="Hoeoeg J.O."/>
        </authorList>
    </citation>
    <scope>CATALYTIC ACTIVITY</scope>
    <scope>FUNCTION</scope>
    <scope>BIOPHYSICOCHEMICAL PROPERTIES</scope>
</reference>
<reference key="10">
    <citation type="journal article" date="2014" name="J. Proteomics">
        <title>An enzyme assisted RP-RPLC approach for in-depth analysis of human liver phosphoproteome.</title>
        <authorList>
            <person name="Bian Y."/>
            <person name="Song C."/>
            <person name="Cheng K."/>
            <person name="Dong M."/>
            <person name="Wang F."/>
            <person name="Huang J."/>
            <person name="Sun D."/>
            <person name="Wang L."/>
            <person name="Ye M."/>
            <person name="Zou H."/>
        </authorList>
    </citation>
    <scope>PHOSPHORYLATION [LARGE SCALE ANALYSIS] AT SER-121 AND SER-278</scope>
    <scope>IDENTIFICATION BY MASS SPECTROMETRY [LARGE SCALE ANALYSIS]</scope>
    <source>
        <tissue>Liver</tissue>
    </source>
</reference>
<reference key="11">
    <citation type="submission" date="2008-04" db="PDB data bank">
        <title>Crystal structure of human class II alcohol dehydrogenase (ADH4) in complex with NAD and Zn.</title>
        <authorList>
            <consortium name="Structural genomics consortium (SGC)"/>
        </authorList>
    </citation>
    <scope>X-RAY CRYSTALLOGRAPHY (2.1 ANGSTROMS) IN COMPLEX WITH NAD AND ZINC IONS</scope>
</reference>
<sequence length="380" mass="40222">MGTKGKVIKCKAAIAWEAGKPLCIEEVEVAPPKAHEVRIQIIATSLCHTDATVIDSKFEGLAFPVIVGHEAAGIVESIGPGVTNVKPGDKVIPLYAPLCRKCKFCLSPLTNLCGKISNLKSPASDQQLMEDKTSRFTCKGKPVYHFFGTSTFSQYTVVSDINLAKIDDDANLERVCLLGCGFSTGYGAAINNAKVTPGSTCAVFGLGGVGLSAVMGCKAAGASRIIGIDINSEKFVKAKALGATDCLNPRDLHKPIQEVIIELTKGGVDFALDCAGGSETMKAALDCTTAGWGSCTFIGVAAGSKGLTIFPEELIIGRTINGTFFGGWKSVDSIPKLVTDYKNKKFNLDALVTHTLPFDKISEAFDLMNQGKSVRTILIF</sequence>
<gene>
    <name evidence="15" type="primary">ADH4</name>
    <name evidence="10" type="synonym">ADH2</name>
</gene>
<accession>P08319</accession>
<accession>A8K470</accession>
<accession>B4DIE7</accession>
<accession>C9J4A9</accession>
<accession>Q8TCD7</accession>
<dbReference type="EC" id="1.1.1.105" evidence="6"/>
<dbReference type="EMBL" id="M15943">
    <property type="protein sequence ID" value="AAA51595.1"/>
    <property type="molecule type" value="mRNA"/>
</dbReference>
<dbReference type="EMBL" id="X56411">
    <property type="protein sequence ID" value="CAA39813.1"/>
    <property type="molecule type" value="Genomic_DNA"/>
</dbReference>
<dbReference type="EMBL" id="X56412">
    <property type="protein sequence ID" value="CAA39813.1"/>
    <property type="status" value="JOINED"/>
    <property type="molecule type" value="Genomic_DNA"/>
</dbReference>
<dbReference type="EMBL" id="X56413">
    <property type="protein sequence ID" value="CAA39813.1"/>
    <property type="status" value="JOINED"/>
    <property type="molecule type" value="Genomic_DNA"/>
</dbReference>
<dbReference type="EMBL" id="X56414">
    <property type="protein sequence ID" value="CAA39813.1"/>
    <property type="status" value="JOINED"/>
    <property type="molecule type" value="Genomic_DNA"/>
</dbReference>
<dbReference type="EMBL" id="X56415">
    <property type="protein sequence ID" value="CAA39813.1"/>
    <property type="status" value="JOINED"/>
    <property type="molecule type" value="Genomic_DNA"/>
</dbReference>
<dbReference type="EMBL" id="X56416">
    <property type="protein sequence ID" value="CAA39813.1"/>
    <property type="status" value="JOINED"/>
    <property type="molecule type" value="Genomic_DNA"/>
</dbReference>
<dbReference type="EMBL" id="X56417">
    <property type="protein sequence ID" value="CAA39813.1"/>
    <property type="status" value="JOINED"/>
    <property type="molecule type" value="Genomic_DNA"/>
</dbReference>
<dbReference type="EMBL" id="X56418">
    <property type="protein sequence ID" value="CAA39813.1"/>
    <property type="status" value="JOINED"/>
    <property type="molecule type" value="Genomic_DNA"/>
</dbReference>
<dbReference type="EMBL" id="X56419">
    <property type="protein sequence ID" value="CAA39813.1"/>
    <property type="status" value="JOINED"/>
    <property type="molecule type" value="Genomic_DNA"/>
</dbReference>
<dbReference type="EMBL" id="AK290835">
    <property type="protein sequence ID" value="BAF83524.1"/>
    <property type="molecule type" value="mRNA"/>
</dbReference>
<dbReference type="EMBL" id="AK295556">
    <property type="protein sequence ID" value="BAG58459.1"/>
    <property type="molecule type" value="mRNA"/>
</dbReference>
<dbReference type="EMBL" id="AY974245">
    <property type="protein sequence ID" value="AAX59034.1"/>
    <property type="molecule type" value="Genomic_DNA"/>
</dbReference>
<dbReference type="EMBL" id="AC019131">
    <property type="status" value="NOT_ANNOTATED_CDS"/>
    <property type="molecule type" value="Genomic_DNA"/>
</dbReference>
<dbReference type="EMBL" id="AP002026">
    <property type="status" value="NOT_ANNOTATED_CDS"/>
    <property type="molecule type" value="Genomic_DNA"/>
</dbReference>
<dbReference type="EMBL" id="BC022319">
    <property type="protein sequence ID" value="AAH22319.1"/>
    <property type="molecule type" value="mRNA"/>
</dbReference>
<dbReference type="CCDS" id="CCDS34032.1">
    <molecule id="P08319-1"/>
</dbReference>
<dbReference type="CCDS" id="CCDS77942.1">
    <molecule id="P08319-2"/>
</dbReference>
<dbReference type="PIR" id="A27109">
    <property type="entry name" value="DEHUAP"/>
</dbReference>
<dbReference type="RefSeq" id="NP_000661.2">
    <molecule id="P08319-1"/>
    <property type="nucleotide sequence ID" value="NM_000670.5"/>
</dbReference>
<dbReference type="RefSeq" id="NP_001293100.1">
    <molecule id="P08319-2"/>
    <property type="nucleotide sequence ID" value="NM_001306171.2"/>
</dbReference>
<dbReference type="RefSeq" id="NP_001293101.1">
    <molecule id="P08319-2"/>
    <property type="nucleotide sequence ID" value="NM_001306172.2"/>
</dbReference>
<dbReference type="PDB" id="3COS">
    <property type="method" value="X-ray"/>
    <property type="resolution" value="2.10 A"/>
    <property type="chains" value="A/B/C/D=1-380"/>
</dbReference>
<dbReference type="PDBsum" id="3COS"/>
<dbReference type="SMR" id="P08319"/>
<dbReference type="BioGRID" id="106639">
    <property type="interactions" value="7"/>
</dbReference>
<dbReference type="FunCoup" id="P08319">
    <property type="interactions" value="278"/>
</dbReference>
<dbReference type="IntAct" id="P08319">
    <property type="interactions" value="2"/>
</dbReference>
<dbReference type="STRING" id="9606.ENSP00000424630"/>
<dbReference type="BindingDB" id="P08319"/>
<dbReference type="ChEMBL" id="CHEMBL2990"/>
<dbReference type="DrugBank" id="DB03559">
    <property type="generic name" value="Cyclohexylformamide"/>
</dbReference>
<dbReference type="DrugBank" id="DB00898">
    <property type="generic name" value="Ethanol"/>
</dbReference>
<dbReference type="DrugBank" id="DB00157">
    <property type="generic name" value="NADH"/>
</dbReference>
<dbReference type="DrugCentral" id="P08319"/>
<dbReference type="SwissLipids" id="SLP:000000499"/>
<dbReference type="GlyGen" id="P08319">
    <property type="glycosylation" value="3 sites, 4 N-linked glycans (1 site), 1 O-linked glycan (1 site)"/>
</dbReference>
<dbReference type="iPTMnet" id="P08319"/>
<dbReference type="PhosphoSitePlus" id="P08319"/>
<dbReference type="BioMuta" id="ADH4"/>
<dbReference type="DMDM" id="308153684"/>
<dbReference type="jPOST" id="P08319"/>
<dbReference type="MassIVE" id="P08319"/>
<dbReference type="PaxDb" id="9606-ENSP00000265512"/>
<dbReference type="PeptideAtlas" id="P08319"/>
<dbReference type="ProteomicsDB" id="52106">
    <molecule id="P08319-1"/>
</dbReference>
<dbReference type="ProteomicsDB" id="52107">
    <molecule id="P08319-2"/>
</dbReference>
<dbReference type="Antibodypedia" id="14813">
    <property type="antibodies" value="277 antibodies from 30 providers"/>
</dbReference>
<dbReference type="DNASU" id="127"/>
<dbReference type="Ensembl" id="ENST00000265512.12">
    <molecule id="P08319-1"/>
    <property type="protein sequence ID" value="ENSP00000265512.7"/>
    <property type="gene ID" value="ENSG00000198099.10"/>
</dbReference>
<dbReference type="Ensembl" id="ENST00000505590.5">
    <molecule id="P08319-2"/>
    <property type="protein sequence ID" value="ENSP00000425416.1"/>
    <property type="gene ID" value="ENSG00000198099.10"/>
</dbReference>
<dbReference type="Ensembl" id="ENST00000508393.5">
    <molecule id="P08319-2"/>
    <property type="protein sequence ID" value="ENSP00000424630.1"/>
    <property type="gene ID" value="ENSG00000198099.10"/>
</dbReference>
<dbReference type="GeneID" id="127"/>
<dbReference type="KEGG" id="hsa:127"/>
<dbReference type="MANE-Select" id="ENST00000265512.12">
    <property type="protein sequence ID" value="ENSP00000265512.7"/>
    <property type="RefSeq nucleotide sequence ID" value="NM_000670.5"/>
    <property type="RefSeq protein sequence ID" value="NP_000661.2"/>
</dbReference>
<dbReference type="UCSC" id="uc003hun.4">
    <molecule id="P08319-1"/>
    <property type="organism name" value="human"/>
</dbReference>
<dbReference type="AGR" id="HGNC:252"/>
<dbReference type="CTD" id="127"/>
<dbReference type="DisGeNET" id="127"/>
<dbReference type="GeneCards" id="ADH4"/>
<dbReference type="HGNC" id="HGNC:252">
    <property type="gene designation" value="ADH4"/>
</dbReference>
<dbReference type="HPA" id="ENSG00000198099">
    <property type="expression patterns" value="Tissue enriched (liver)"/>
</dbReference>
<dbReference type="MIM" id="103740">
    <property type="type" value="gene"/>
</dbReference>
<dbReference type="neXtProt" id="NX_P08319"/>
<dbReference type="OpenTargets" id="ENSG00000198099"/>
<dbReference type="PharmGKB" id="PA24573"/>
<dbReference type="VEuPathDB" id="HostDB:ENSG00000198099"/>
<dbReference type="eggNOG" id="KOG0022">
    <property type="taxonomic scope" value="Eukaryota"/>
</dbReference>
<dbReference type="GeneTree" id="ENSGT00940000162645"/>
<dbReference type="HOGENOM" id="CLU_026673_14_0_1"/>
<dbReference type="InParanoid" id="P08319"/>
<dbReference type="OMA" id="HISGCGV"/>
<dbReference type="OrthoDB" id="417550at2759"/>
<dbReference type="PAN-GO" id="P08319">
    <property type="GO annotations" value="5 GO annotations based on evolutionary models"/>
</dbReference>
<dbReference type="PhylomeDB" id="P08319"/>
<dbReference type="TreeFam" id="TF300429"/>
<dbReference type="BioCyc" id="MetaCyc:HS06569-MONOMER"/>
<dbReference type="BRENDA" id="1.1.1.1">
    <property type="organism ID" value="2681"/>
</dbReference>
<dbReference type="PathwayCommons" id="P08319"/>
<dbReference type="Reactome" id="R-HSA-5365859">
    <property type="pathway name" value="RA biosynthesis pathway"/>
</dbReference>
<dbReference type="Reactome" id="R-HSA-71384">
    <property type="pathway name" value="Ethanol oxidation"/>
</dbReference>
<dbReference type="SABIO-RK" id="P08319"/>
<dbReference type="SignaLink" id="P08319"/>
<dbReference type="BioGRID-ORCS" id="127">
    <property type="hits" value="8 hits in 1148 CRISPR screens"/>
</dbReference>
<dbReference type="ChiTaRS" id="ADH4">
    <property type="organism name" value="human"/>
</dbReference>
<dbReference type="EvolutionaryTrace" id="P08319"/>
<dbReference type="GeneWiki" id="ADH4"/>
<dbReference type="GenomeRNAi" id="127"/>
<dbReference type="Pharos" id="P08319">
    <property type="development level" value="Tbio"/>
</dbReference>
<dbReference type="PRO" id="PR:P08319"/>
<dbReference type="Proteomes" id="UP000005640">
    <property type="component" value="Chromosome 4"/>
</dbReference>
<dbReference type="RNAct" id="P08319">
    <property type="molecule type" value="protein"/>
</dbReference>
<dbReference type="Bgee" id="ENSG00000198099">
    <property type="expression patterns" value="Expressed in jejunal mucosa and 167 other cell types or tissues"/>
</dbReference>
<dbReference type="ExpressionAtlas" id="P08319">
    <property type="expression patterns" value="baseline and differential"/>
</dbReference>
<dbReference type="GO" id="GO:0005829">
    <property type="term" value="C:cytosol"/>
    <property type="evidence" value="ECO:0000314"/>
    <property type="project" value="HPA"/>
</dbReference>
<dbReference type="GO" id="GO:0005654">
    <property type="term" value="C:nucleoplasm"/>
    <property type="evidence" value="ECO:0000314"/>
    <property type="project" value="HPA"/>
</dbReference>
<dbReference type="GO" id="GO:0004022">
    <property type="term" value="F:alcohol dehydrogenase (NAD+) activity"/>
    <property type="evidence" value="ECO:0000314"/>
    <property type="project" value="UniProtKB"/>
</dbReference>
<dbReference type="GO" id="GO:0004032">
    <property type="term" value="F:aldose reductase (NADPH) activity"/>
    <property type="evidence" value="ECO:0007669"/>
    <property type="project" value="Ensembl"/>
</dbReference>
<dbReference type="GO" id="GO:0005503">
    <property type="term" value="F:all-trans retinal binding"/>
    <property type="evidence" value="ECO:0000314"/>
    <property type="project" value="UniProtKB"/>
</dbReference>
<dbReference type="GO" id="GO:0004745">
    <property type="term" value="F:all-trans-retinol dehydrogenase (NAD+) activity"/>
    <property type="evidence" value="ECO:0000314"/>
    <property type="project" value="UniProtKB"/>
</dbReference>
<dbReference type="GO" id="GO:0018479">
    <property type="term" value="F:benzaldehyde dehydrogenase (NAD+) activity"/>
    <property type="evidence" value="ECO:0000314"/>
    <property type="project" value="UniProtKB"/>
</dbReference>
<dbReference type="GO" id="GO:0051287">
    <property type="term" value="F:NAD binding"/>
    <property type="evidence" value="ECO:0000314"/>
    <property type="project" value="UniProtKB"/>
</dbReference>
<dbReference type="GO" id="GO:0003960">
    <property type="term" value="F:NADPH:quinone reductase activity"/>
    <property type="evidence" value="ECO:0000250"/>
    <property type="project" value="UniProtKB"/>
</dbReference>
<dbReference type="GO" id="GO:0019841">
    <property type="term" value="F:retinol binding"/>
    <property type="evidence" value="ECO:0000314"/>
    <property type="project" value="UniProtKB"/>
</dbReference>
<dbReference type="GO" id="GO:0051903">
    <property type="term" value="F:S-(hydroxymethyl)glutathione dehydrogenase [NAD(P)+] activity"/>
    <property type="evidence" value="ECO:0000318"/>
    <property type="project" value="GO_Central"/>
</dbReference>
<dbReference type="GO" id="GO:0008270">
    <property type="term" value="F:zinc ion binding"/>
    <property type="evidence" value="ECO:0000314"/>
    <property type="project" value="UniProtKB"/>
</dbReference>
<dbReference type="GO" id="GO:0046164">
    <property type="term" value="P:alcohol catabolic process"/>
    <property type="evidence" value="ECO:0000250"/>
    <property type="project" value="UniProtKB"/>
</dbReference>
<dbReference type="GO" id="GO:0006066">
    <property type="term" value="P:alcohol metabolic process"/>
    <property type="evidence" value="ECO:0000314"/>
    <property type="project" value="UniProtKB"/>
</dbReference>
<dbReference type="GO" id="GO:0006081">
    <property type="term" value="P:aldehyde metabolic process"/>
    <property type="evidence" value="ECO:0000314"/>
    <property type="project" value="UniProtKB"/>
</dbReference>
<dbReference type="GO" id="GO:0006067">
    <property type="term" value="P:ethanol metabolic process"/>
    <property type="evidence" value="ECO:0007669"/>
    <property type="project" value="Ensembl"/>
</dbReference>
<dbReference type="GO" id="GO:0010430">
    <property type="term" value="P:fatty acid omega-oxidation"/>
    <property type="evidence" value="ECO:0000314"/>
    <property type="project" value="UniProtKB"/>
</dbReference>
<dbReference type="GO" id="GO:0046294">
    <property type="term" value="P:formaldehyde catabolic process"/>
    <property type="evidence" value="ECO:0000318"/>
    <property type="project" value="GO_Central"/>
</dbReference>
<dbReference type="GO" id="GO:1901661">
    <property type="term" value="P:quinone metabolic process"/>
    <property type="evidence" value="ECO:0000250"/>
    <property type="project" value="UniProtKB"/>
</dbReference>
<dbReference type="GO" id="GO:0001523">
    <property type="term" value="P:retinoid metabolic process"/>
    <property type="evidence" value="ECO:0000314"/>
    <property type="project" value="UniProtKB"/>
</dbReference>
<dbReference type="GO" id="GO:0042572">
    <property type="term" value="P:retinol metabolic process"/>
    <property type="evidence" value="ECO:0000314"/>
    <property type="project" value="UniProtKB"/>
</dbReference>
<dbReference type="CDD" id="cd08299">
    <property type="entry name" value="alcohol_DH_class_I_II_IV"/>
    <property type="match status" value="1"/>
</dbReference>
<dbReference type="FunFam" id="3.40.50.720:FF:000003">
    <property type="entry name" value="S-(hydroxymethyl)glutathione dehydrogenase"/>
    <property type="match status" value="1"/>
</dbReference>
<dbReference type="FunFam" id="3.90.180.10:FF:000001">
    <property type="entry name" value="S-(hydroxymethyl)glutathione dehydrogenase"/>
    <property type="match status" value="1"/>
</dbReference>
<dbReference type="Gene3D" id="3.90.180.10">
    <property type="entry name" value="Medium-chain alcohol dehydrogenases, catalytic domain"/>
    <property type="match status" value="1"/>
</dbReference>
<dbReference type="Gene3D" id="3.40.50.720">
    <property type="entry name" value="NAD(P)-binding Rossmann-like Domain"/>
    <property type="match status" value="1"/>
</dbReference>
<dbReference type="InterPro" id="IPR013149">
    <property type="entry name" value="ADH-like_C"/>
</dbReference>
<dbReference type="InterPro" id="IPR013154">
    <property type="entry name" value="ADH-like_N"/>
</dbReference>
<dbReference type="InterPro" id="IPR002328">
    <property type="entry name" value="ADH_Zn_CS"/>
</dbReference>
<dbReference type="InterPro" id="IPR011032">
    <property type="entry name" value="GroES-like_sf"/>
</dbReference>
<dbReference type="InterPro" id="IPR036291">
    <property type="entry name" value="NAD(P)-bd_dom_sf"/>
</dbReference>
<dbReference type="InterPro" id="IPR020843">
    <property type="entry name" value="PKS_ER"/>
</dbReference>
<dbReference type="PANTHER" id="PTHR43880">
    <property type="entry name" value="ALCOHOL DEHYDROGENASE"/>
    <property type="match status" value="1"/>
</dbReference>
<dbReference type="PANTHER" id="PTHR43880:SF14">
    <property type="entry name" value="ALL-TRANS-RETINOL DEHYDROGENASE [NAD(+)] ADH4"/>
    <property type="match status" value="1"/>
</dbReference>
<dbReference type="Pfam" id="PF08240">
    <property type="entry name" value="ADH_N"/>
    <property type="match status" value="1"/>
</dbReference>
<dbReference type="Pfam" id="PF00107">
    <property type="entry name" value="ADH_zinc_N"/>
    <property type="match status" value="1"/>
</dbReference>
<dbReference type="SMART" id="SM00829">
    <property type="entry name" value="PKS_ER"/>
    <property type="match status" value="1"/>
</dbReference>
<dbReference type="SUPFAM" id="SSF50129">
    <property type="entry name" value="GroES-like"/>
    <property type="match status" value="2"/>
</dbReference>
<dbReference type="SUPFAM" id="SSF51735">
    <property type="entry name" value="NAD(P)-binding Rossmann-fold domains"/>
    <property type="match status" value="1"/>
</dbReference>
<dbReference type="PROSITE" id="PS00059">
    <property type="entry name" value="ADH_ZINC"/>
    <property type="match status" value="1"/>
</dbReference>
<keyword id="KW-0002">3D-structure</keyword>
<keyword id="KW-0025">Alternative splicing</keyword>
<keyword id="KW-0963">Cytoplasm</keyword>
<keyword id="KW-0903">Direct protein sequencing</keyword>
<keyword id="KW-0443">Lipid metabolism</keyword>
<keyword id="KW-0479">Metal-binding</keyword>
<keyword id="KW-0520">NAD</keyword>
<keyword id="KW-0560">Oxidoreductase</keyword>
<keyword id="KW-0597">Phosphoprotein</keyword>
<keyword id="KW-1267">Proteomics identification</keyword>
<keyword id="KW-1185">Reference proteome</keyword>
<keyword id="KW-0862">Zinc</keyword>
<comment type="function">
    <text evidence="2 5 6">Catalyzes the NAD-dependent oxidation of either all-trans-retinol or 9-cis-retinol (PubMed:17279314). Also oxidizes long chain omega-hydroxy fatty acids, such as 20-HETE, producing both the intermediate aldehyde, 20-oxoarachidonate and the end product, a dicarboxylic acid, (5Z,8Z,11Z,14Z)-eicosatetraenedioate (PubMed:16081420). Also catalyzes the reduction of benzoquinones (PubMed:10514444).</text>
</comment>
<comment type="catalytic activity">
    <reaction evidence="6">
        <text>all-trans-retinol + NAD(+) = all-trans-retinal + NADH + H(+)</text>
        <dbReference type="Rhea" id="RHEA:21284"/>
        <dbReference type="ChEBI" id="CHEBI:15378"/>
        <dbReference type="ChEBI" id="CHEBI:17336"/>
        <dbReference type="ChEBI" id="CHEBI:17898"/>
        <dbReference type="ChEBI" id="CHEBI:57540"/>
        <dbReference type="ChEBI" id="CHEBI:57945"/>
        <dbReference type="EC" id="1.1.1.105"/>
    </reaction>
    <physiologicalReaction direction="left-to-right" evidence="14">
        <dbReference type="Rhea" id="RHEA:21285"/>
    </physiologicalReaction>
</comment>
<comment type="catalytic activity">
    <reaction evidence="6">
        <text>9-cis-retinol + NAD(+) = 9-cis-retinal + NADH + H(+)</text>
        <dbReference type="Rhea" id="RHEA:42052"/>
        <dbReference type="ChEBI" id="CHEBI:15378"/>
        <dbReference type="ChEBI" id="CHEBI:57540"/>
        <dbReference type="ChEBI" id="CHEBI:57945"/>
        <dbReference type="ChEBI" id="CHEBI:78272"/>
        <dbReference type="ChEBI" id="CHEBI:78273"/>
    </reaction>
    <physiologicalReaction direction="left-to-right" evidence="14">
        <dbReference type="Rhea" id="RHEA:42053"/>
    </physiologicalReaction>
</comment>
<comment type="catalytic activity">
    <reaction evidence="5">
        <text>20-oxo-(5Z,8Z,11Z,14Z)-eicosatetraenoate + NAD(+) + H2O = (5Z,8Z,11Z,14Z)-eicosatetraenedioate + NADH + 2 H(+)</text>
        <dbReference type="Rhea" id="RHEA:39803"/>
        <dbReference type="ChEBI" id="CHEBI:15377"/>
        <dbReference type="ChEBI" id="CHEBI:15378"/>
        <dbReference type="ChEBI" id="CHEBI:57540"/>
        <dbReference type="ChEBI" id="CHEBI:57945"/>
        <dbReference type="ChEBI" id="CHEBI:76645"/>
        <dbReference type="ChEBI" id="CHEBI:76647"/>
    </reaction>
    <physiologicalReaction direction="left-to-right" evidence="13">
        <dbReference type="Rhea" id="RHEA:39804"/>
    </physiologicalReaction>
</comment>
<comment type="catalytic activity">
    <reaction evidence="5">
        <text>20-hydroxy-(5Z,8Z,11Z,14Z)-eicosatetraenoate + NAD(+) = 20-oxo-(5Z,8Z,11Z,14Z)-eicosatetraenoate + NADH + H(+)</text>
        <dbReference type="Rhea" id="RHEA:39799"/>
        <dbReference type="ChEBI" id="CHEBI:15378"/>
        <dbReference type="ChEBI" id="CHEBI:57540"/>
        <dbReference type="ChEBI" id="CHEBI:57945"/>
        <dbReference type="ChEBI" id="CHEBI:76624"/>
        <dbReference type="ChEBI" id="CHEBI:76645"/>
    </reaction>
    <physiologicalReaction direction="left-to-right" evidence="13">
        <dbReference type="Rhea" id="RHEA:39800"/>
    </physiologicalReaction>
</comment>
<comment type="catalytic activity">
    <reaction evidence="2">
        <text>1,4-benzoquinone + NADH + H(+) = hydroquinone + NAD(+)</text>
        <dbReference type="Rhea" id="RHEA:60660"/>
        <dbReference type="ChEBI" id="CHEBI:15378"/>
        <dbReference type="ChEBI" id="CHEBI:16509"/>
        <dbReference type="ChEBI" id="CHEBI:17594"/>
        <dbReference type="ChEBI" id="CHEBI:57540"/>
        <dbReference type="ChEBI" id="CHEBI:57945"/>
    </reaction>
    <physiologicalReaction direction="left-to-right" evidence="12">
        <dbReference type="Rhea" id="RHEA:60661"/>
    </physiologicalReaction>
</comment>
<comment type="cofactor">
    <cofactor>
        <name>Zn(2+)</name>
        <dbReference type="ChEBI" id="CHEBI:29105"/>
    </cofactor>
    <text>Binds 2 Zn(2+) ions per subunit.</text>
</comment>
<comment type="activity regulation">
    <text evidence="1 5">Oxydation of 20-HETE is inhibited by low concentrations of N-heptylformamide (PubMed:16081420). Oxydation of 20-HETE is a decreased by 55-65% by either all-trans-retinol or all-trans-retinoic acid. Strongly inhibited by omega-hydroxy fatty acids (By similarity).</text>
</comment>
<comment type="biophysicochemical properties">
    <kinetics>
        <KM evidence="6">0.14 uM for all-trans-retinol</KM>
        <KM evidence="6">0.29 uM for all-trans-retinal</KM>
        <KM evidence="6">0.054 uM for 9-cis-retinol</KM>
        <KM evidence="6">0.21 uM for 9-cis-retinal</KM>
        <KM evidence="5">9.5 uM for 20-HETE</KM>
        <KM evidence="2">0.088 mM for 1,4-benzoquinone</KM>
    </kinetics>
</comment>
<comment type="subunit">
    <text evidence="7">Homodimer.</text>
</comment>
<comment type="interaction">
    <interactant intactId="EBI-3927856">
        <id>P08319</id>
    </interactant>
    <interactant intactId="EBI-11525489">
        <id>Q86WT6-2</id>
        <label>TRIM69</label>
    </interactant>
    <organismsDiffer>false</organismsDiffer>
    <experiments>3</experiments>
</comment>
<comment type="subcellular location">
    <subcellularLocation>
        <location>Cytoplasm</location>
    </subcellularLocation>
</comment>
<comment type="alternative products">
    <event type="alternative splicing"/>
    <isoform>
        <id>P08319-1</id>
        <name>1</name>
        <sequence type="displayed"/>
    </isoform>
    <isoform>
        <id>P08319-2</id>
        <name>2</name>
        <sequence type="described" ref="VSP_036788"/>
    </isoform>
</comment>
<comment type="miscellaneous">
    <text>There are 7 different ADH's isozymes in human: three belongs to class-I: alpha, beta, and gamma, one to class-II: pi, one to class-III: chi, one to class-IV: ADH7 and one to class-V: ADH6.</text>
</comment>
<comment type="similarity">
    <text evidence="11">Belongs to the zinc-containing alcohol dehydrogenase family. Class-II subfamily.</text>
</comment>
<protein>
    <recommendedName>
        <fullName evidence="11">All-trans-retinol dehydrogenase [NAD(+)] ADH4</fullName>
        <ecNumber evidence="6">1.1.1.105</ecNumber>
    </recommendedName>
    <alternativeName>
        <fullName evidence="10">Alcohol dehydrogenase 2</fullName>
    </alternativeName>
    <alternativeName>
        <fullName>Alcohol dehydrogenase 4</fullName>
    </alternativeName>
    <alternativeName>
        <fullName>Alcohol dehydrogenase class II pi chain</fullName>
    </alternativeName>
</protein>
<evidence type="ECO:0000250" key="1">
    <source>
        <dbReference type="UniProtKB" id="Q9QYY9"/>
    </source>
</evidence>
<evidence type="ECO:0000269" key="2">
    <source>
    </source>
</evidence>
<evidence type="ECO:0000269" key="3">
    <source>
    </source>
</evidence>
<evidence type="ECO:0000269" key="4">
    <source>
    </source>
</evidence>
<evidence type="ECO:0000269" key="5">
    <source>
    </source>
</evidence>
<evidence type="ECO:0000269" key="6">
    <source>
    </source>
</evidence>
<evidence type="ECO:0000269" key="7">
    <source ref="11"/>
</evidence>
<evidence type="ECO:0000269" key="8">
    <source ref="4"/>
</evidence>
<evidence type="ECO:0000303" key="9">
    <source>
    </source>
</evidence>
<evidence type="ECO:0000303" key="10">
    <source>
    </source>
</evidence>
<evidence type="ECO:0000305" key="11"/>
<evidence type="ECO:0000305" key="12">
    <source>
    </source>
</evidence>
<evidence type="ECO:0000305" key="13">
    <source>
    </source>
</evidence>
<evidence type="ECO:0000305" key="14">
    <source>
    </source>
</evidence>
<evidence type="ECO:0000312" key="15">
    <source>
        <dbReference type="HGNC" id="HGNC:252"/>
    </source>
</evidence>
<evidence type="ECO:0007744" key="16">
    <source>
    </source>
</evidence>
<evidence type="ECO:0007829" key="17">
    <source>
        <dbReference type="PDB" id="3COS"/>
    </source>
</evidence>
<feature type="chain" id="PRO_0000160681" description="All-trans-retinol dehydrogenase [NAD(+)] ADH4">
    <location>
        <begin position="1"/>
        <end position="380"/>
    </location>
</feature>
<feature type="binding site">
    <location>
        <position position="47"/>
    </location>
    <ligand>
        <name>Zn(2+)</name>
        <dbReference type="ChEBI" id="CHEBI:29105"/>
        <label>1</label>
        <note>catalytic</note>
    </ligand>
</feature>
<feature type="binding site" evidence="7">
    <location>
        <begin position="48"/>
        <end position="49"/>
    </location>
    <ligand>
        <name>NAD(+)</name>
        <dbReference type="ChEBI" id="CHEBI:57540"/>
    </ligand>
</feature>
<feature type="binding site">
    <location>
        <position position="69"/>
    </location>
    <ligand>
        <name>Zn(2+)</name>
        <dbReference type="ChEBI" id="CHEBI:29105"/>
        <label>1</label>
        <note>catalytic</note>
    </ligand>
</feature>
<feature type="binding site">
    <location>
        <position position="99"/>
    </location>
    <ligand>
        <name>Zn(2+)</name>
        <dbReference type="ChEBI" id="CHEBI:29105"/>
        <label>2</label>
    </ligand>
</feature>
<feature type="binding site">
    <location>
        <position position="102"/>
    </location>
    <ligand>
        <name>Zn(2+)</name>
        <dbReference type="ChEBI" id="CHEBI:29105"/>
        <label>2</label>
    </ligand>
</feature>
<feature type="binding site">
    <location>
        <position position="105"/>
    </location>
    <ligand>
        <name>Zn(2+)</name>
        <dbReference type="ChEBI" id="CHEBI:29105"/>
        <label>2</label>
    </ligand>
</feature>
<feature type="binding site">
    <location>
        <position position="113"/>
    </location>
    <ligand>
        <name>Zn(2+)</name>
        <dbReference type="ChEBI" id="CHEBI:29105"/>
        <label>2</label>
    </ligand>
</feature>
<feature type="binding site">
    <location>
        <position position="180"/>
    </location>
    <ligand>
        <name>Zn(2+)</name>
        <dbReference type="ChEBI" id="CHEBI:29105"/>
        <label>1</label>
        <note>catalytic</note>
    </ligand>
</feature>
<feature type="binding site" evidence="7">
    <location>
        <begin position="205"/>
        <end position="210"/>
    </location>
    <ligand>
        <name>NAD(+)</name>
        <dbReference type="ChEBI" id="CHEBI:57540"/>
    </ligand>
</feature>
<feature type="binding site" evidence="7">
    <location>
        <position position="229"/>
    </location>
    <ligand>
        <name>NAD(+)</name>
        <dbReference type="ChEBI" id="CHEBI:57540"/>
    </ligand>
</feature>
<feature type="binding site" evidence="7">
    <location>
        <position position="234"/>
    </location>
    <ligand>
        <name>NAD(+)</name>
        <dbReference type="ChEBI" id="CHEBI:57540"/>
    </ligand>
</feature>
<feature type="binding site" evidence="7">
    <location>
        <begin position="298"/>
        <end position="300"/>
    </location>
    <ligand>
        <name>NAD(+)</name>
        <dbReference type="ChEBI" id="CHEBI:57540"/>
    </ligand>
</feature>
<feature type="binding site" evidence="7">
    <location>
        <begin position="323"/>
        <end position="325"/>
    </location>
    <ligand>
        <name>NAD(+)</name>
        <dbReference type="ChEBI" id="CHEBI:57540"/>
    </ligand>
</feature>
<feature type="binding site" evidence="7">
    <location>
        <position position="375"/>
    </location>
    <ligand>
        <name>NAD(+)</name>
        <dbReference type="ChEBI" id="CHEBI:57540"/>
    </ligand>
</feature>
<feature type="modified residue" description="Phosphoserine" evidence="16">
    <location>
        <position position="121"/>
    </location>
</feature>
<feature type="modified residue" description="Phosphoserine" evidence="16">
    <location>
        <position position="278"/>
    </location>
</feature>
<feature type="splice variant" id="VSP_036788" description="In isoform 2." evidence="9">
    <original>MGTKGK</original>
    <variation>MLVRGPHFELQRCKTHLFSSNYLTQ</variation>
    <location>
        <begin position="1"/>
        <end position="6"/>
    </location>
</feature>
<feature type="sequence variant" id="VAR_023461" description="In dbSNP:rs1126671." evidence="3 4">
    <original>I</original>
    <variation>V</variation>
    <location>
        <position position="309"/>
    </location>
</feature>
<feature type="sequence variant" id="VAR_023462" description="In dbSNP:rs29001219." evidence="8">
    <original>R</original>
    <variation>H</variation>
    <location>
        <position position="318"/>
    </location>
</feature>
<feature type="sequence variant" id="VAR_023463" description="In dbSNP:rs1126673." evidence="3 4">
    <original>V</original>
    <variation>I</variation>
    <location>
        <position position="374"/>
    </location>
</feature>
<feature type="sequence conflict" description="In Ref. 1; AAA51595 and 2; CAA39813." evidence="11" ref="1 2">
    <original>T</original>
    <variation>S</variation>
    <location>
        <position position="52"/>
    </location>
</feature>
<feature type="sequence conflict" description="In Ref. 1; AAA51595." evidence="11" ref="1">
    <original>F</original>
    <variation>FGRCQEQFRILSD</variation>
    <location>
        <position position="380"/>
    </location>
</feature>
<feature type="strand" evidence="17">
    <location>
        <begin position="8"/>
        <end position="15"/>
    </location>
</feature>
<feature type="strand" evidence="17">
    <location>
        <begin position="23"/>
        <end position="29"/>
    </location>
</feature>
<feature type="strand" evidence="17">
    <location>
        <begin position="36"/>
        <end position="45"/>
    </location>
</feature>
<feature type="helix" evidence="17">
    <location>
        <begin position="48"/>
        <end position="52"/>
    </location>
</feature>
<feature type="strand" evidence="17">
    <location>
        <begin position="63"/>
        <end position="65"/>
    </location>
</feature>
<feature type="strand" evidence="17">
    <location>
        <begin position="70"/>
        <end position="78"/>
    </location>
</feature>
<feature type="strand" evidence="17">
    <location>
        <begin position="90"/>
        <end position="93"/>
    </location>
</feature>
<feature type="strand" evidence="17">
    <location>
        <begin position="100"/>
        <end position="102"/>
    </location>
</feature>
<feature type="turn" evidence="17">
    <location>
        <begin position="103"/>
        <end position="106"/>
    </location>
</feature>
<feature type="helix" evidence="17">
    <location>
        <begin position="122"/>
        <end position="124"/>
    </location>
</feature>
<feature type="strand" evidence="17">
    <location>
        <begin position="135"/>
        <end position="138"/>
    </location>
</feature>
<feature type="strand" evidence="17">
    <location>
        <begin position="141"/>
        <end position="144"/>
    </location>
</feature>
<feature type="turn" evidence="17">
    <location>
        <begin position="147"/>
        <end position="149"/>
    </location>
</feature>
<feature type="strand" evidence="17">
    <location>
        <begin position="152"/>
        <end position="159"/>
    </location>
</feature>
<feature type="strand" evidence="17">
    <location>
        <begin position="162"/>
        <end position="165"/>
    </location>
</feature>
<feature type="helix" evidence="17">
    <location>
        <begin position="172"/>
        <end position="175"/>
    </location>
</feature>
<feature type="helix" evidence="17">
    <location>
        <begin position="176"/>
        <end position="179"/>
    </location>
</feature>
<feature type="helix" evidence="17">
    <location>
        <begin position="181"/>
        <end position="190"/>
    </location>
</feature>
<feature type="turn" evidence="17">
    <location>
        <begin position="191"/>
        <end position="193"/>
    </location>
</feature>
<feature type="strand" evidence="17">
    <location>
        <begin position="200"/>
        <end position="204"/>
    </location>
</feature>
<feature type="helix" evidence="17">
    <location>
        <begin position="208"/>
        <end position="219"/>
    </location>
</feature>
<feature type="strand" evidence="17">
    <location>
        <begin position="223"/>
        <end position="228"/>
    </location>
</feature>
<feature type="helix" evidence="17">
    <location>
        <begin position="232"/>
        <end position="234"/>
    </location>
</feature>
<feature type="helix" evidence="17">
    <location>
        <begin position="235"/>
        <end position="240"/>
    </location>
</feature>
<feature type="strand" evidence="17">
    <location>
        <begin position="244"/>
        <end position="247"/>
    </location>
</feature>
<feature type="helix" evidence="17">
    <location>
        <begin position="249"/>
        <end position="251"/>
    </location>
</feature>
<feature type="helix" evidence="17">
    <location>
        <begin position="256"/>
        <end position="263"/>
    </location>
</feature>
<feature type="strand" evidence="17">
    <location>
        <begin position="268"/>
        <end position="273"/>
    </location>
</feature>
<feature type="helix" evidence="17">
    <location>
        <begin position="278"/>
        <end position="286"/>
    </location>
</feature>
<feature type="turn" evidence="17">
    <location>
        <begin position="290"/>
        <end position="292"/>
    </location>
</feature>
<feature type="strand" evidence="17">
    <location>
        <begin position="293"/>
        <end position="297"/>
    </location>
</feature>
<feature type="strand" evidence="17">
    <location>
        <begin position="307"/>
        <end position="309"/>
    </location>
</feature>
<feature type="helix" evidence="17">
    <location>
        <begin position="311"/>
        <end position="315"/>
    </location>
</feature>
<feature type="strand" evidence="17">
    <location>
        <begin position="318"/>
        <end position="322"/>
    </location>
</feature>
<feature type="helix" evidence="17">
    <location>
        <begin position="325"/>
        <end position="327"/>
    </location>
</feature>
<feature type="helix" evidence="17">
    <location>
        <begin position="330"/>
        <end position="342"/>
    </location>
</feature>
<feature type="helix" evidence="17">
    <location>
        <begin position="349"/>
        <end position="351"/>
    </location>
</feature>
<feature type="strand" evidence="17">
    <location>
        <begin position="352"/>
        <end position="357"/>
    </location>
</feature>
<feature type="helix" evidence="17">
    <location>
        <begin position="358"/>
        <end position="360"/>
    </location>
</feature>
<feature type="helix" evidence="17">
    <location>
        <begin position="361"/>
        <end position="369"/>
    </location>
</feature>
<feature type="strand" evidence="17">
    <location>
        <begin position="374"/>
        <end position="379"/>
    </location>
</feature>
<proteinExistence type="evidence at protein level"/>
<name>ADH4_HUMAN</name>
<organism>
    <name type="scientific">Homo sapiens</name>
    <name type="common">Human</name>
    <dbReference type="NCBI Taxonomy" id="9606"/>
    <lineage>
        <taxon>Eukaryota</taxon>
        <taxon>Metazoa</taxon>
        <taxon>Chordata</taxon>
        <taxon>Craniata</taxon>
        <taxon>Vertebrata</taxon>
        <taxon>Euteleostomi</taxon>
        <taxon>Mammalia</taxon>
        <taxon>Eutheria</taxon>
        <taxon>Euarchontoglires</taxon>
        <taxon>Primates</taxon>
        <taxon>Haplorrhini</taxon>
        <taxon>Catarrhini</taxon>
        <taxon>Hominidae</taxon>
        <taxon>Homo</taxon>
    </lineage>
</organism>